<comment type="function">
    <text evidence="1">Sigma factors are initiation factors that promote the attachment of RNA polymerase to specific initiation sites and are then released. This sigma factor is the primary sigma factor during exponential growth.</text>
</comment>
<comment type="subunit">
    <text evidence="1">Interacts transiently with the RNA polymerase catalytic core.</text>
</comment>
<comment type="subcellular location">
    <subcellularLocation>
        <location evidence="1">Cytoplasm</location>
    </subcellularLocation>
</comment>
<comment type="similarity">
    <text evidence="1">Belongs to the sigma-70 factor family. RpoD/SigA subfamily.</text>
</comment>
<keyword id="KW-0963">Cytoplasm</keyword>
<keyword id="KW-0238">DNA-binding</keyword>
<keyword id="KW-0731">Sigma factor</keyword>
<keyword id="KW-0804">Transcription</keyword>
<keyword id="KW-0805">Transcription regulation</keyword>
<feature type="chain" id="PRO_0000093913" description="RNA polymerase sigma factor SigA">
    <location>
        <begin position="1"/>
        <end position="368"/>
    </location>
</feature>
<feature type="DNA-binding region" description="H-T-H motif" evidence="1">
    <location>
        <begin position="329"/>
        <end position="348"/>
    </location>
</feature>
<feature type="region of interest" description="Disordered" evidence="2">
    <location>
        <begin position="69"/>
        <end position="90"/>
    </location>
</feature>
<feature type="region of interest" description="Sigma-70 factor domain-2" evidence="1">
    <location>
        <begin position="135"/>
        <end position="205"/>
    </location>
</feature>
<feature type="region of interest" description="Sigma-70 factor domain-3" evidence="1">
    <location>
        <begin position="214"/>
        <end position="290"/>
    </location>
</feature>
<feature type="region of interest" description="Sigma-70 factor domain-4" evidence="1">
    <location>
        <begin position="303"/>
        <end position="356"/>
    </location>
</feature>
<feature type="short sequence motif" description="Interaction with polymerase core subunit RpoC">
    <location>
        <begin position="159"/>
        <end position="162"/>
    </location>
</feature>
<feature type="compositionally biased region" description="Basic and acidic residues" evidence="2">
    <location>
        <begin position="71"/>
        <end position="83"/>
    </location>
</feature>
<proteinExistence type="inferred from homology"/>
<gene>
    <name evidence="1" type="primary">sigA</name>
    <name type="synonym">plaC</name>
    <name type="synonym">rpoD</name>
    <name type="ordered locus">SACOL1618</name>
</gene>
<sequence>MSDNTVKIKKQTIDPTLTLEDVKKQLIEKGKKEGHLSHEEIAEKLQNFDIDSDQMDDFFDQLNDNDISLVNEKDSSDTDEKLNPSDLSAPPGVKINDPVRMYLKEIGRVNLLSAQEEIELAKRIEQGDEVAKSRLAEANLRLVVSIAKRYVGRGMLFLDLIQEGNMGLIKAVEKFDFNKGFKFSTYATWWIRQAITRAIADQARTIRIPVHMVETINKLIRVQRQLLQDLGRDPAPEEIGEEMDLPAEKVREILKIAQEPVSLETPIGEEDDSHLGDFIEDQEAQSPSDHAAYELLKEQLEDVLDTLTDREENVLRLRFGLDDGRTRTLEEVGKVFGVTRERIRQIEAKALRKLRHPSRSKRLKDFMD</sequence>
<protein>
    <recommendedName>
        <fullName evidence="1">RNA polymerase sigma factor SigA</fullName>
    </recommendedName>
</protein>
<organism>
    <name type="scientific">Staphylococcus aureus (strain COL)</name>
    <dbReference type="NCBI Taxonomy" id="93062"/>
    <lineage>
        <taxon>Bacteria</taxon>
        <taxon>Bacillati</taxon>
        <taxon>Bacillota</taxon>
        <taxon>Bacilli</taxon>
        <taxon>Bacillales</taxon>
        <taxon>Staphylococcaceae</taxon>
        <taxon>Staphylococcus</taxon>
    </lineage>
</organism>
<name>SIGA_STAAC</name>
<reference key="1">
    <citation type="journal article" date="2005" name="J. Bacteriol.">
        <title>Insights on evolution of virulence and resistance from the complete genome analysis of an early methicillin-resistant Staphylococcus aureus strain and a biofilm-producing methicillin-resistant Staphylococcus epidermidis strain.</title>
        <authorList>
            <person name="Gill S.R."/>
            <person name="Fouts D.E."/>
            <person name="Archer G.L."/>
            <person name="Mongodin E.F."/>
            <person name="DeBoy R.T."/>
            <person name="Ravel J."/>
            <person name="Paulsen I.T."/>
            <person name="Kolonay J.F."/>
            <person name="Brinkac L.M."/>
            <person name="Beanan M.J."/>
            <person name="Dodson R.J."/>
            <person name="Daugherty S.C."/>
            <person name="Madupu R."/>
            <person name="Angiuoli S.V."/>
            <person name="Durkin A.S."/>
            <person name="Haft D.H."/>
            <person name="Vamathevan J.J."/>
            <person name="Khouri H."/>
            <person name="Utterback T.R."/>
            <person name="Lee C."/>
            <person name="Dimitrov G."/>
            <person name="Jiang L."/>
            <person name="Qin H."/>
            <person name="Weidman J."/>
            <person name="Tran K."/>
            <person name="Kang K.H."/>
            <person name="Hance I.R."/>
            <person name="Nelson K.E."/>
            <person name="Fraser C.M."/>
        </authorList>
    </citation>
    <scope>NUCLEOTIDE SEQUENCE [LARGE SCALE GENOMIC DNA]</scope>
    <source>
        <strain>COL</strain>
    </source>
</reference>
<evidence type="ECO:0000255" key="1">
    <source>
        <dbReference type="HAMAP-Rule" id="MF_00963"/>
    </source>
</evidence>
<evidence type="ECO:0000256" key="2">
    <source>
        <dbReference type="SAM" id="MobiDB-lite"/>
    </source>
</evidence>
<accession>Q5HFJ9</accession>
<dbReference type="EMBL" id="CP000046">
    <property type="protein sequence ID" value="AAW38234.1"/>
    <property type="molecule type" value="Genomic_DNA"/>
</dbReference>
<dbReference type="RefSeq" id="WP_001283055.1">
    <property type="nucleotide sequence ID" value="NZ_JBGOFO010000003.1"/>
</dbReference>
<dbReference type="SMR" id="Q5HFJ9"/>
<dbReference type="GeneID" id="98345932"/>
<dbReference type="KEGG" id="sac:SACOL1618"/>
<dbReference type="HOGENOM" id="CLU_014793_3_3_9"/>
<dbReference type="Proteomes" id="UP000000530">
    <property type="component" value="Chromosome"/>
</dbReference>
<dbReference type="GO" id="GO:0005737">
    <property type="term" value="C:cytoplasm"/>
    <property type="evidence" value="ECO:0007669"/>
    <property type="project" value="UniProtKB-SubCell"/>
</dbReference>
<dbReference type="GO" id="GO:0003677">
    <property type="term" value="F:DNA binding"/>
    <property type="evidence" value="ECO:0007669"/>
    <property type="project" value="UniProtKB-UniRule"/>
</dbReference>
<dbReference type="GO" id="GO:0016987">
    <property type="term" value="F:sigma factor activity"/>
    <property type="evidence" value="ECO:0007669"/>
    <property type="project" value="UniProtKB-UniRule"/>
</dbReference>
<dbReference type="GO" id="GO:0006352">
    <property type="term" value="P:DNA-templated transcription initiation"/>
    <property type="evidence" value="ECO:0007669"/>
    <property type="project" value="UniProtKB-UniRule"/>
</dbReference>
<dbReference type="CDD" id="cd06171">
    <property type="entry name" value="Sigma70_r4"/>
    <property type="match status" value="1"/>
</dbReference>
<dbReference type="FunFam" id="1.10.10.10:FF:000002">
    <property type="entry name" value="RNA polymerase sigma factor SigA"/>
    <property type="match status" value="1"/>
</dbReference>
<dbReference type="FunFam" id="1.10.10.10:FF:000004">
    <property type="entry name" value="RNA polymerase sigma factor SigA"/>
    <property type="match status" value="1"/>
</dbReference>
<dbReference type="FunFam" id="1.10.601.10:FF:000001">
    <property type="entry name" value="RNA polymerase sigma factor SigA"/>
    <property type="match status" value="1"/>
</dbReference>
<dbReference type="Gene3D" id="1.10.601.10">
    <property type="entry name" value="RNA Polymerase Primary Sigma Factor"/>
    <property type="match status" value="2"/>
</dbReference>
<dbReference type="Gene3D" id="1.10.220.120">
    <property type="entry name" value="Sigma-70 factor, region 1.1"/>
    <property type="match status" value="1"/>
</dbReference>
<dbReference type="Gene3D" id="1.10.10.10">
    <property type="entry name" value="Winged helix-like DNA-binding domain superfamily/Winged helix DNA-binding domain"/>
    <property type="match status" value="2"/>
</dbReference>
<dbReference type="HAMAP" id="MF_00963">
    <property type="entry name" value="Sigma70_RpoD_SigA"/>
    <property type="match status" value="1"/>
</dbReference>
<dbReference type="InterPro" id="IPR014284">
    <property type="entry name" value="RNA_pol_sigma-70_dom"/>
</dbReference>
<dbReference type="InterPro" id="IPR000943">
    <property type="entry name" value="RNA_pol_sigma70"/>
</dbReference>
<dbReference type="InterPro" id="IPR009042">
    <property type="entry name" value="RNA_pol_sigma70_r1_2"/>
</dbReference>
<dbReference type="InterPro" id="IPR007627">
    <property type="entry name" value="RNA_pol_sigma70_r2"/>
</dbReference>
<dbReference type="InterPro" id="IPR007624">
    <property type="entry name" value="RNA_pol_sigma70_r3"/>
</dbReference>
<dbReference type="InterPro" id="IPR007630">
    <property type="entry name" value="RNA_pol_sigma70_r4"/>
</dbReference>
<dbReference type="InterPro" id="IPR007127">
    <property type="entry name" value="RNA_pol_sigma_70_r1_1"/>
</dbReference>
<dbReference type="InterPro" id="IPR042189">
    <property type="entry name" value="RNA_pol_sigma_70_r1_1_sf"/>
</dbReference>
<dbReference type="InterPro" id="IPR013325">
    <property type="entry name" value="RNA_pol_sigma_r2"/>
</dbReference>
<dbReference type="InterPro" id="IPR013324">
    <property type="entry name" value="RNA_pol_sigma_r3/r4-like"/>
</dbReference>
<dbReference type="InterPro" id="IPR012760">
    <property type="entry name" value="RNA_pol_sigma_RpoD_C"/>
</dbReference>
<dbReference type="InterPro" id="IPR050239">
    <property type="entry name" value="Sigma-70_RNA_pol_init_factors"/>
</dbReference>
<dbReference type="InterPro" id="IPR028630">
    <property type="entry name" value="Sigma70_RpoD"/>
</dbReference>
<dbReference type="InterPro" id="IPR036388">
    <property type="entry name" value="WH-like_DNA-bd_sf"/>
</dbReference>
<dbReference type="NCBIfam" id="NF006666">
    <property type="entry name" value="PRK09210.1"/>
    <property type="match status" value="1"/>
</dbReference>
<dbReference type="NCBIfam" id="TIGR02393">
    <property type="entry name" value="RpoD_Cterm"/>
    <property type="match status" value="1"/>
</dbReference>
<dbReference type="NCBIfam" id="TIGR02937">
    <property type="entry name" value="sigma70-ECF"/>
    <property type="match status" value="1"/>
</dbReference>
<dbReference type="PANTHER" id="PTHR30603">
    <property type="entry name" value="RNA POLYMERASE SIGMA FACTOR RPO"/>
    <property type="match status" value="1"/>
</dbReference>
<dbReference type="PANTHER" id="PTHR30603:SF60">
    <property type="entry name" value="RNA POLYMERASE SIGMA FACTOR RPOD"/>
    <property type="match status" value="1"/>
</dbReference>
<dbReference type="Pfam" id="PF03979">
    <property type="entry name" value="Sigma70_r1_1"/>
    <property type="match status" value="1"/>
</dbReference>
<dbReference type="Pfam" id="PF00140">
    <property type="entry name" value="Sigma70_r1_2"/>
    <property type="match status" value="1"/>
</dbReference>
<dbReference type="Pfam" id="PF04542">
    <property type="entry name" value="Sigma70_r2"/>
    <property type="match status" value="1"/>
</dbReference>
<dbReference type="Pfam" id="PF04539">
    <property type="entry name" value="Sigma70_r3"/>
    <property type="match status" value="1"/>
</dbReference>
<dbReference type="Pfam" id="PF04545">
    <property type="entry name" value="Sigma70_r4"/>
    <property type="match status" value="1"/>
</dbReference>
<dbReference type="PRINTS" id="PR00046">
    <property type="entry name" value="SIGMA70FCT"/>
</dbReference>
<dbReference type="SUPFAM" id="SSF88946">
    <property type="entry name" value="Sigma2 domain of RNA polymerase sigma factors"/>
    <property type="match status" value="1"/>
</dbReference>
<dbReference type="SUPFAM" id="SSF88659">
    <property type="entry name" value="Sigma3 and sigma4 domains of RNA polymerase sigma factors"/>
    <property type="match status" value="2"/>
</dbReference>
<dbReference type="PROSITE" id="PS00715">
    <property type="entry name" value="SIGMA70_1"/>
    <property type="match status" value="1"/>
</dbReference>
<dbReference type="PROSITE" id="PS00716">
    <property type="entry name" value="SIGMA70_2"/>
    <property type="match status" value="1"/>
</dbReference>